<dbReference type="EMBL" id="CP000236">
    <property type="protein sequence ID" value="ABD45251.1"/>
    <property type="molecule type" value="Genomic_DNA"/>
</dbReference>
<dbReference type="RefSeq" id="WP_006010978.1">
    <property type="nucleotide sequence ID" value="NC_007799.1"/>
</dbReference>
<dbReference type="SMR" id="Q2GGT4"/>
<dbReference type="STRING" id="205920.ECH_0536"/>
<dbReference type="KEGG" id="ech:ECH_0536"/>
<dbReference type="eggNOG" id="COG1381">
    <property type="taxonomic scope" value="Bacteria"/>
</dbReference>
<dbReference type="HOGENOM" id="CLU_086029_0_0_5"/>
<dbReference type="OrthoDB" id="9804792at2"/>
<dbReference type="Proteomes" id="UP000008320">
    <property type="component" value="Chromosome"/>
</dbReference>
<dbReference type="GO" id="GO:0043590">
    <property type="term" value="C:bacterial nucleoid"/>
    <property type="evidence" value="ECO:0007669"/>
    <property type="project" value="TreeGrafter"/>
</dbReference>
<dbReference type="GO" id="GO:0006310">
    <property type="term" value="P:DNA recombination"/>
    <property type="evidence" value="ECO:0007669"/>
    <property type="project" value="UniProtKB-UniRule"/>
</dbReference>
<dbReference type="GO" id="GO:0006302">
    <property type="term" value="P:double-strand break repair"/>
    <property type="evidence" value="ECO:0007669"/>
    <property type="project" value="TreeGrafter"/>
</dbReference>
<dbReference type="Gene3D" id="2.40.50.140">
    <property type="entry name" value="Nucleic acid-binding proteins"/>
    <property type="match status" value="1"/>
</dbReference>
<dbReference type="Gene3D" id="1.20.1440.120">
    <property type="entry name" value="Recombination protein O, C-terminal domain"/>
    <property type="match status" value="1"/>
</dbReference>
<dbReference type="HAMAP" id="MF_00201">
    <property type="entry name" value="RecO"/>
    <property type="match status" value="1"/>
</dbReference>
<dbReference type="InterPro" id="IPR037278">
    <property type="entry name" value="ARFGAP/RecO"/>
</dbReference>
<dbReference type="InterPro" id="IPR022572">
    <property type="entry name" value="DNA_rep/recomb_RecO_N"/>
</dbReference>
<dbReference type="InterPro" id="IPR012340">
    <property type="entry name" value="NA-bd_OB-fold"/>
</dbReference>
<dbReference type="InterPro" id="IPR003717">
    <property type="entry name" value="RecO"/>
</dbReference>
<dbReference type="InterPro" id="IPR042242">
    <property type="entry name" value="RecO_C"/>
</dbReference>
<dbReference type="NCBIfam" id="TIGR00613">
    <property type="entry name" value="reco"/>
    <property type="match status" value="1"/>
</dbReference>
<dbReference type="PANTHER" id="PTHR33991">
    <property type="entry name" value="DNA REPAIR PROTEIN RECO"/>
    <property type="match status" value="1"/>
</dbReference>
<dbReference type="PANTHER" id="PTHR33991:SF1">
    <property type="entry name" value="DNA REPAIR PROTEIN RECO"/>
    <property type="match status" value="1"/>
</dbReference>
<dbReference type="Pfam" id="PF02565">
    <property type="entry name" value="RecO_C"/>
    <property type="match status" value="1"/>
</dbReference>
<dbReference type="Pfam" id="PF11967">
    <property type="entry name" value="RecO_N"/>
    <property type="match status" value="1"/>
</dbReference>
<dbReference type="SUPFAM" id="SSF57863">
    <property type="entry name" value="ArfGap/RecO-like zinc finger"/>
    <property type="match status" value="1"/>
</dbReference>
<dbReference type="SUPFAM" id="SSF50249">
    <property type="entry name" value="Nucleic acid-binding proteins"/>
    <property type="match status" value="1"/>
</dbReference>
<name>RECO_EHRCR</name>
<evidence type="ECO:0000255" key="1">
    <source>
        <dbReference type="HAMAP-Rule" id="MF_00201"/>
    </source>
</evidence>
<reference key="1">
    <citation type="journal article" date="2006" name="PLoS Genet.">
        <title>Comparative genomics of emerging human ehrlichiosis agents.</title>
        <authorList>
            <person name="Dunning Hotopp J.C."/>
            <person name="Lin M."/>
            <person name="Madupu R."/>
            <person name="Crabtree J."/>
            <person name="Angiuoli S.V."/>
            <person name="Eisen J.A."/>
            <person name="Seshadri R."/>
            <person name="Ren Q."/>
            <person name="Wu M."/>
            <person name="Utterback T.R."/>
            <person name="Smith S."/>
            <person name="Lewis M."/>
            <person name="Khouri H."/>
            <person name="Zhang C."/>
            <person name="Niu H."/>
            <person name="Lin Q."/>
            <person name="Ohashi N."/>
            <person name="Zhi N."/>
            <person name="Nelson W.C."/>
            <person name="Brinkac L.M."/>
            <person name="Dodson R.J."/>
            <person name="Rosovitz M.J."/>
            <person name="Sundaram J.P."/>
            <person name="Daugherty S.C."/>
            <person name="Davidsen T."/>
            <person name="Durkin A.S."/>
            <person name="Gwinn M.L."/>
            <person name="Haft D.H."/>
            <person name="Selengut J.D."/>
            <person name="Sullivan S.A."/>
            <person name="Zafar N."/>
            <person name="Zhou L."/>
            <person name="Benahmed F."/>
            <person name="Forberger H."/>
            <person name="Halpin R."/>
            <person name="Mulligan S."/>
            <person name="Robinson J."/>
            <person name="White O."/>
            <person name="Rikihisa Y."/>
            <person name="Tettelin H."/>
        </authorList>
    </citation>
    <scope>NUCLEOTIDE SEQUENCE [LARGE SCALE GENOMIC DNA]</scope>
    <source>
        <strain>ATCC CRL-10679 / Arkansas</strain>
    </source>
</reference>
<proteinExistence type="inferred from homology"/>
<gene>
    <name evidence="1" type="primary">recO</name>
    <name type="ordered locus">ECH_0536</name>
</gene>
<accession>Q2GGT4</accession>
<comment type="function">
    <text evidence="1">Involved in DNA repair and RecF pathway recombination.</text>
</comment>
<comment type="similarity">
    <text evidence="1">Belongs to the RecO family.</text>
</comment>
<organism>
    <name type="scientific">Ehrlichia chaffeensis (strain ATCC CRL-10679 / Arkansas)</name>
    <dbReference type="NCBI Taxonomy" id="205920"/>
    <lineage>
        <taxon>Bacteria</taxon>
        <taxon>Pseudomonadati</taxon>
        <taxon>Pseudomonadota</taxon>
        <taxon>Alphaproteobacteria</taxon>
        <taxon>Rickettsiales</taxon>
        <taxon>Anaplasmataceae</taxon>
        <taxon>Ehrlichia</taxon>
    </lineage>
</organism>
<keyword id="KW-0227">DNA damage</keyword>
<keyword id="KW-0233">DNA recombination</keyword>
<keyword id="KW-0234">DNA repair</keyword>
<keyword id="KW-1185">Reference proteome</keyword>
<protein>
    <recommendedName>
        <fullName evidence="1">DNA repair protein RecO</fullName>
    </recommendedName>
    <alternativeName>
        <fullName evidence="1">Recombination protein O</fullName>
    </alternativeName>
</protein>
<sequence length="244" mass="28558">MRWQDQGIVIAIRKYGDDQIIISIFTQKHGLKKGLAKYSKKATHRLQIGDYVNVTWSSRLISNLGCFKYELIKSTLYHYIQDNLKTMCIAFSTVILDQVLPENEENYIIYNCLDIFINSIQFQDINWKIKYLRLELTLLSELGFGLDLSRCAVNNTNENLTFISPKTGKAVSKTVGLPYSKSLLPLPQLLYDVYNNYEYKYSKTDFKLSLNVLGYFFKKHFLTEKNTILIKYREEIIKLIDLRD</sequence>
<feature type="chain" id="PRO_1000193376" description="DNA repair protein RecO">
    <location>
        <begin position="1"/>
        <end position="244"/>
    </location>
</feature>